<keyword id="KW-0028">Amino-acid biosynthesis</keyword>
<keyword id="KW-0057">Aromatic amino acid biosynthesis</keyword>
<keyword id="KW-0328">Glycosyltransferase</keyword>
<keyword id="KW-0460">Magnesium</keyword>
<keyword id="KW-0479">Metal-binding</keyword>
<keyword id="KW-1185">Reference proteome</keyword>
<keyword id="KW-0808">Transferase</keyword>
<keyword id="KW-0822">Tryptophan biosynthesis</keyword>
<sequence length="343" mass="36064">MDIKQALKKLVASIDLSTEEMISVMRIVMTGGATPAQIGGFLVALRMKGETLDEITGAAMVMRELATPVNIDVDYLVDTCGTGGDGANLFNLSTASAFVVAAAGGRVAKHGNRSVSSSTGSADVLEAAGIKLDITAEQVARCVKEIGVGFMFAPSHHSAMKHAIGPRRELGMRTIFNMLGPLTNPANVKRQVIGVFNGELCKPMAEVLGRLGSEHVMVVHAKDGLDEISLATETQVAELKGGEIREYIIKPEDFGMQSKSLIGLSVSNAEDSLLLIRDALGNRRGQYAEKAADIIALNAGAAIYVSGVAGSLSDGVEMARDAIGSSLAGEKIRELAAFTQYLQ</sequence>
<proteinExistence type="inferred from homology"/>
<evidence type="ECO:0000255" key="1">
    <source>
        <dbReference type="HAMAP-Rule" id="MF_00211"/>
    </source>
</evidence>
<feature type="chain" id="PRO_1000099791" description="Anthranilate phosphoribosyltransferase">
    <location>
        <begin position="1"/>
        <end position="343"/>
    </location>
</feature>
<feature type="binding site" evidence="1">
    <location>
        <position position="81"/>
    </location>
    <ligand>
        <name>5-phospho-alpha-D-ribose 1-diphosphate</name>
        <dbReference type="ChEBI" id="CHEBI:58017"/>
    </ligand>
</feature>
<feature type="binding site" evidence="1">
    <location>
        <position position="81"/>
    </location>
    <ligand>
        <name>anthranilate</name>
        <dbReference type="ChEBI" id="CHEBI:16567"/>
        <label>1</label>
    </ligand>
</feature>
<feature type="binding site" evidence="1">
    <location>
        <begin position="84"/>
        <end position="85"/>
    </location>
    <ligand>
        <name>5-phospho-alpha-D-ribose 1-diphosphate</name>
        <dbReference type="ChEBI" id="CHEBI:58017"/>
    </ligand>
</feature>
<feature type="binding site" evidence="1">
    <location>
        <begin position="91"/>
        <end position="94"/>
    </location>
    <ligand>
        <name>5-phospho-alpha-D-ribose 1-diphosphate</name>
        <dbReference type="ChEBI" id="CHEBI:58017"/>
    </ligand>
</feature>
<feature type="binding site" evidence="1">
    <location>
        <position position="93"/>
    </location>
    <ligand>
        <name>Mg(2+)</name>
        <dbReference type="ChEBI" id="CHEBI:18420"/>
        <label>1</label>
    </ligand>
</feature>
<feature type="binding site" evidence="1">
    <location>
        <begin position="109"/>
        <end position="117"/>
    </location>
    <ligand>
        <name>5-phospho-alpha-D-ribose 1-diphosphate</name>
        <dbReference type="ChEBI" id="CHEBI:58017"/>
    </ligand>
</feature>
<feature type="binding site" evidence="1">
    <location>
        <position position="112"/>
    </location>
    <ligand>
        <name>anthranilate</name>
        <dbReference type="ChEBI" id="CHEBI:16567"/>
        <label>1</label>
    </ligand>
</feature>
<feature type="binding site" evidence="1">
    <location>
        <position position="121"/>
    </location>
    <ligand>
        <name>5-phospho-alpha-D-ribose 1-diphosphate</name>
        <dbReference type="ChEBI" id="CHEBI:58017"/>
    </ligand>
</feature>
<feature type="binding site" evidence="1">
    <location>
        <position position="167"/>
    </location>
    <ligand>
        <name>anthranilate</name>
        <dbReference type="ChEBI" id="CHEBI:16567"/>
        <label>2</label>
    </ligand>
</feature>
<feature type="binding site" evidence="1">
    <location>
        <position position="226"/>
    </location>
    <ligand>
        <name>Mg(2+)</name>
        <dbReference type="ChEBI" id="CHEBI:18420"/>
        <label>2</label>
    </ligand>
</feature>
<feature type="binding site" evidence="1">
    <location>
        <position position="227"/>
    </location>
    <ligand>
        <name>Mg(2+)</name>
        <dbReference type="ChEBI" id="CHEBI:18420"/>
        <label>1</label>
    </ligand>
</feature>
<feature type="binding site" evidence="1">
    <location>
        <position position="227"/>
    </location>
    <ligand>
        <name>Mg(2+)</name>
        <dbReference type="ChEBI" id="CHEBI:18420"/>
        <label>2</label>
    </ligand>
</feature>
<gene>
    <name evidence="1" type="primary">trpD</name>
    <name type="ordered locus">CJA_2661</name>
</gene>
<reference key="1">
    <citation type="journal article" date="2008" name="J. Bacteriol.">
        <title>Insights into plant cell wall degradation from the genome sequence of the soil bacterium Cellvibrio japonicus.</title>
        <authorList>
            <person name="DeBoy R.T."/>
            <person name="Mongodin E.F."/>
            <person name="Fouts D.E."/>
            <person name="Tailford L.E."/>
            <person name="Khouri H."/>
            <person name="Emerson J.B."/>
            <person name="Mohamoud Y."/>
            <person name="Watkins K."/>
            <person name="Henrissat B."/>
            <person name="Gilbert H.J."/>
            <person name="Nelson K.E."/>
        </authorList>
    </citation>
    <scope>NUCLEOTIDE SEQUENCE [LARGE SCALE GENOMIC DNA]</scope>
    <source>
        <strain>Ueda107</strain>
    </source>
</reference>
<name>TRPD_CELJU</name>
<dbReference type="EC" id="2.4.2.18" evidence="1"/>
<dbReference type="EMBL" id="CP000934">
    <property type="protein sequence ID" value="ACE83343.1"/>
    <property type="molecule type" value="Genomic_DNA"/>
</dbReference>
<dbReference type="RefSeq" id="WP_012488256.1">
    <property type="nucleotide sequence ID" value="NC_010995.1"/>
</dbReference>
<dbReference type="SMR" id="B3PLP1"/>
<dbReference type="STRING" id="498211.CJA_2661"/>
<dbReference type="KEGG" id="cja:CJA_2661"/>
<dbReference type="eggNOG" id="COG0547">
    <property type="taxonomic scope" value="Bacteria"/>
</dbReference>
<dbReference type="HOGENOM" id="CLU_034315_2_1_6"/>
<dbReference type="OrthoDB" id="9806430at2"/>
<dbReference type="UniPathway" id="UPA00035">
    <property type="reaction ID" value="UER00041"/>
</dbReference>
<dbReference type="Proteomes" id="UP000001036">
    <property type="component" value="Chromosome"/>
</dbReference>
<dbReference type="GO" id="GO:0005829">
    <property type="term" value="C:cytosol"/>
    <property type="evidence" value="ECO:0007669"/>
    <property type="project" value="TreeGrafter"/>
</dbReference>
<dbReference type="GO" id="GO:0004048">
    <property type="term" value="F:anthranilate phosphoribosyltransferase activity"/>
    <property type="evidence" value="ECO:0007669"/>
    <property type="project" value="UniProtKB-UniRule"/>
</dbReference>
<dbReference type="GO" id="GO:0000287">
    <property type="term" value="F:magnesium ion binding"/>
    <property type="evidence" value="ECO:0007669"/>
    <property type="project" value="UniProtKB-UniRule"/>
</dbReference>
<dbReference type="GO" id="GO:0000162">
    <property type="term" value="P:L-tryptophan biosynthetic process"/>
    <property type="evidence" value="ECO:0007669"/>
    <property type="project" value="UniProtKB-UniRule"/>
</dbReference>
<dbReference type="FunFam" id="1.20.970.10:FF:000006">
    <property type="entry name" value="Anthranilate phosphoribosyltransferase"/>
    <property type="match status" value="1"/>
</dbReference>
<dbReference type="FunFam" id="3.40.1030.10:FF:000002">
    <property type="entry name" value="Anthranilate phosphoribosyltransferase"/>
    <property type="match status" value="1"/>
</dbReference>
<dbReference type="Gene3D" id="3.40.1030.10">
    <property type="entry name" value="Nucleoside phosphorylase/phosphoribosyltransferase catalytic domain"/>
    <property type="match status" value="1"/>
</dbReference>
<dbReference type="Gene3D" id="1.20.970.10">
    <property type="entry name" value="Transferase, Pyrimidine Nucleoside Phosphorylase, Chain C"/>
    <property type="match status" value="1"/>
</dbReference>
<dbReference type="HAMAP" id="MF_00211">
    <property type="entry name" value="TrpD"/>
    <property type="match status" value="1"/>
</dbReference>
<dbReference type="InterPro" id="IPR005940">
    <property type="entry name" value="Anthranilate_Pribosyl_Tfrase"/>
</dbReference>
<dbReference type="InterPro" id="IPR000312">
    <property type="entry name" value="Glycosyl_Trfase_fam3"/>
</dbReference>
<dbReference type="InterPro" id="IPR017459">
    <property type="entry name" value="Glycosyl_Trfase_fam3_N_dom"/>
</dbReference>
<dbReference type="InterPro" id="IPR036320">
    <property type="entry name" value="Glycosyl_Trfase_fam3_N_dom_sf"/>
</dbReference>
<dbReference type="InterPro" id="IPR035902">
    <property type="entry name" value="Nuc_phospho_transferase"/>
</dbReference>
<dbReference type="NCBIfam" id="TIGR01245">
    <property type="entry name" value="trpD"/>
    <property type="match status" value="1"/>
</dbReference>
<dbReference type="PANTHER" id="PTHR43285">
    <property type="entry name" value="ANTHRANILATE PHOSPHORIBOSYLTRANSFERASE"/>
    <property type="match status" value="1"/>
</dbReference>
<dbReference type="PANTHER" id="PTHR43285:SF2">
    <property type="entry name" value="ANTHRANILATE PHOSPHORIBOSYLTRANSFERASE"/>
    <property type="match status" value="1"/>
</dbReference>
<dbReference type="Pfam" id="PF02885">
    <property type="entry name" value="Glycos_trans_3N"/>
    <property type="match status" value="1"/>
</dbReference>
<dbReference type="Pfam" id="PF00591">
    <property type="entry name" value="Glycos_transf_3"/>
    <property type="match status" value="1"/>
</dbReference>
<dbReference type="SUPFAM" id="SSF52418">
    <property type="entry name" value="Nucleoside phosphorylase/phosphoribosyltransferase catalytic domain"/>
    <property type="match status" value="1"/>
</dbReference>
<dbReference type="SUPFAM" id="SSF47648">
    <property type="entry name" value="Nucleoside phosphorylase/phosphoribosyltransferase N-terminal domain"/>
    <property type="match status" value="1"/>
</dbReference>
<accession>B3PLP1</accession>
<protein>
    <recommendedName>
        <fullName evidence="1">Anthranilate phosphoribosyltransferase</fullName>
        <ecNumber evidence="1">2.4.2.18</ecNumber>
    </recommendedName>
</protein>
<comment type="function">
    <text evidence="1">Catalyzes the transfer of the phosphoribosyl group of 5-phosphorylribose-1-pyrophosphate (PRPP) to anthranilate to yield N-(5'-phosphoribosyl)-anthranilate (PRA).</text>
</comment>
<comment type="catalytic activity">
    <reaction evidence="1">
        <text>N-(5-phospho-beta-D-ribosyl)anthranilate + diphosphate = 5-phospho-alpha-D-ribose 1-diphosphate + anthranilate</text>
        <dbReference type="Rhea" id="RHEA:11768"/>
        <dbReference type="ChEBI" id="CHEBI:16567"/>
        <dbReference type="ChEBI" id="CHEBI:18277"/>
        <dbReference type="ChEBI" id="CHEBI:33019"/>
        <dbReference type="ChEBI" id="CHEBI:58017"/>
        <dbReference type="EC" id="2.4.2.18"/>
    </reaction>
</comment>
<comment type="cofactor">
    <cofactor evidence="1">
        <name>Mg(2+)</name>
        <dbReference type="ChEBI" id="CHEBI:18420"/>
    </cofactor>
    <text evidence="1">Binds 2 magnesium ions per monomer.</text>
</comment>
<comment type="pathway">
    <text evidence="1">Amino-acid biosynthesis; L-tryptophan biosynthesis; L-tryptophan from chorismate: step 2/5.</text>
</comment>
<comment type="subunit">
    <text evidence="1">Homodimer.</text>
</comment>
<comment type="similarity">
    <text evidence="1">Belongs to the anthranilate phosphoribosyltransferase family.</text>
</comment>
<organism>
    <name type="scientific">Cellvibrio japonicus (strain Ueda107)</name>
    <name type="common">Pseudomonas fluorescens subsp. cellulosa</name>
    <dbReference type="NCBI Taxonomy" id="498211"/>
    <lineage>
        <taxon>Bacteria</taxon>
        <taxon>Pseudomonadati</taxon>
        <taxon>Pseudomonadota</taxon>
        <taxon>Gammaproteobacteria</taxon>
        <taxon>Cellvibrionales</taxon>
        <taxon>Cellvibrionaceae</taxon>
        <taxon>Cellvibrio</taxon>
    </lineage>
</organism>